<sequence>EI</sequence>
<organism>
    <name type="scientific">Homo sapiens</name>
    <name type="common">Human</name>
    <dbReference type="NCBI Taxonomy" id="9606"/>
    <lineage>
        <taxon>Eukaryota</taxon>
        <taxon>Metazoa</taxon>
        <taxon>Chordata</taxon>
        <taxon>Craniata</taxon>
        <taxon>Vertebrata</taxon>
        <taxon>Euteleostomi</taxon>
        <taxon>Mammalia</taxon>
        <taxon>Eutheria</taxon>
        <taxon>Euarchontoglires</taxon>
        <taxon>Primates</taxon>
        <taxon>Haplorrhini</taxon>
        <taxon>Catarrhini</taxon>
        <taxon>Hominidae</taxon>
        <taxon>Homo</taxon>
    </lineage>
</organism>
<proteinExistence type="evidence at protein level"/>
<name>TRDD1_HUMAN</name>
<gene>
    <name evidence="6" type="primary">TRDD1</name>
</gene>
<dbReference type="EMBL" id="AC244502">
    <property type="status" value="NOT_ANNOTATED_CDS"/>
    <property type="molecule type" value="Genomic_DNA"/>
</dbReference>
<dbReference type="IMGT_GENE-DB" id="TRDD1"/>
<dbReference type="Ensembl" id="ENST00000415118.1">
    <property type="protein sequence ID" value="ENSP00000451042.1"/>
    <property type="gene ID" value="ENSG00000223997.1"/>
</dbReference>
<dbReference type="AGR" id="HGNC:12254"/>
<dbReference type="GeneCards" id="TRDD1"/>
<dbReference type="HGNC" id="HGNC:12254">
    <property type="gene designation" value="TRDD1"/>
</dbReference>
<dbReference type="HPA" id="ENSG00000223997">
    <property type="expression patterns" value="Not detected"/>
</dbReference>
<dbReference type="neXtProt" id="NX_P0DPR3"/>
<dbReference type="VEuPathDB" id="HostDB:ENSG00000223997"/>
<dbReference type="InParanoid" id="P0DPR3"/>
<dbReference type="PAN-GO" id="P0DPR3">
    <property type="GO annotations" value="0 GO annotations based on evolutionary models"/>
</dbReference>
<dbReference type="Pharos" id="P0DPR3">
    <property type="development level" value="Tdark"/>
</dbReference>
<dbReference type="PRO" id="PR:P0DPR3"/>
<dbReference type="Proteomes" id="UP000005640">
    <property type="component" value="Chromosome 14"/>
</dbReference>
<dbReference type="GO" id="GO:0042101">
    <property type="term" value="C:T cell receptor complex"/>
    <property type="evidence" value="ECO:0007669"/>
    <property type="project" value="UniProtKB-KW"/>
</dbReference>
<dbReference type="GO" id="GO:0002250">
    <property type="term" value="P:adaptive immune response"/>
    <property type="evidence" value="ECO:0007669"/>
    <property type="project" value="UniProtKB-KW"/>
</dbReference>
<feature type="chain" id="PRO_0000445809" description="T cell receptor delta diversity 1">
    <location>
        <begin position="1" status="less than"/>
        <end position="2" status="greater than"/>
    </location>
</feature>
<feature type="non-terminal residue">
    <location>
        <position position="1"/>
    </location>
</feature>
<feature type="non-terminal residue">
    <location>
        <position position="2"/>
    </location>
</feature>
<keyword id="KW-1064">Adaptive immunity</keyword>
<keyword id="KW-1003">Cell membrane</keyword>
<keyword id="KW-0391">Immunity</keyword>
<keyword id="KW-0472">Membrane</keyword>
<keyword id="KW-0675">Receptor</keyword>
<keyword id="KW-1185">Reference proteome</keyword>
<keyword id="KW-1279">T cell receptor</keyword>
<reference key="1">
    <citation type="journal article" date="2003" name="Nature">
        <title>The DNA sequence and analysis of human chromosome 14.</title>
        <authorList>
            <person name="Heilig R."/>
            <person name="Eckenberg R."/>
            <person name="Petit J.-L."/>
            <person name="Fonknechten N."/>
            <person name="Da Silva C."/>
            <person name="Cattolico L."/>
            <person name="Levy M."/>
            <person name="Barbe V."/>
            <person name="De Berardinis V."/>
            <person name="Ureta-Vidal A."/>
            <person name="Pelletier E."/>
            <person name="Vico V."/>
            <person name="Anthouard V."/>
            <person name="Rowen L."/>
            <person name="Madan A."/>
            <person name="Qin S."/>
            <person name="Sun H."/>
            <person name="Du H."/>
            <person name="Pepin K."/>
            <person name="Artiguenave F."/>
            <person name="Robert C."/>
            <person name="Cruaud C."/>
            <person name="Bruels T."/>
            <person name="Jaillon O."/>
            <person name="Friedlander L."/>
            <person name="Samson G."/>
            <person name="Brottier P."/>
            <person name="Cure S."/>
            <person name="Segurens B."/>
            <person name="Aniere F."/>
            <person name="Samain S."/>
            <person name="Crespeau H."/>
            <person name="Abbasi N."/>
            <person name="Aiach N."/>
            <person name="Boscus D."/>
            <person name="Dickhoff R."/>
            <person name="Dors M."/>
            <person name="Dubois I."/>
            <person name="Friedman C."/>
            <person name="Gouyvenoux M."/>
            <person name="James R."/>
            <person name="Madan A."/>
            <person name="Mairey-Estrada B."/>
            <person name="Mangenot S."/>
            <person name="Martins N."/>
            <person name="Menard M."/>
            <person name="Oztas S."/>
            <person name="Ratcliffe A."/>
            <person name="Shaffer T."/>
            <person name="Trask B."/>
            <person name="Vacherie B."/>
            <person name="Bellemere C."/>
            <person name="Belser C."/>
            <person name="Besnard-Gonnet M."/>
            <person name="Bartol-Mavel D."/>
            <person name="Boutard M."/>
            <person name="Briez-Silla S."/>
            <person name="Combette S."/>
            <person name="Dufosse-Laurent V."/>
            <person name="Ferron C."/>
            <person name="Lechaplais C."/>
            <person name="Louesse C."/>
            <person name="Muselet D."/>
            <person name="Magdelenat G."/>
            <person name="Pateau E."/>
            <person name="Petit E."/>
            <person name="Sirvain-Trukniewicz P."/>
            <person name="Trybou A."/>
            <person name="Vega-Czarny N."/>
            <person name="Bataille E."/>
            <person name="Bluet E."/>
            <person name="Bordelais I."/>
            <person name="Dubois M."/>
            <person name="Dumont C."/>
            <person name="Guerin T."/>
            <person name="Haffray S."/>
            <person name="Hammadi R."/>
            <person name="Muanga J."/>
            <person name="Pellouin V."/>
            <person name="Robert D."/>
            <person name="Wunderle E."/>
            <person name="Gauguet G."/>
            <person name="Roy A."/>
            <person name="Sainte-Marthe L."/>
            <person name="Verdier J."/>
            <person name="Verdier-Discala C."/>
            <person name="Hillier L.W."/>
            <person name="Fulton L."/>
            <person name="McPherson J."/>
            <person name="Matsuda F."/>
            <person name="Wilson R."/>
            <person name="Scarpelli C."/>
            <person name="Gyapay G."/>
            <person name="Wincker P."/>
            <person name="Saurin W."/>
            <person name="Quetier F."/>
            <person name="Waterston R."/>
            <person name="Hood L."/>
            <person name="Weissenbach J."/>
        </authorList>
    </citation>
    <scope>NUCLEOTIDE SEQUENCE [LARGE SCALE GENOMIC DNA] (IMGT ALLELE TRDD1*01)</scope>
</reference>
<reference key="2">
    <citation type="book" date="2001" name="The T Cell Receptor FactsBook.">
        <title>The T Cell Receptor FactsBook.</title>
        <editorList>
            <person name="Lefranc M.P."/>
            <person name="Lefranc G."/>
        </editorList>
        <authorList>
            <person name="Lefranc M.P."/>
            <person name="Lefranc G."/>
        </authorList>
    </citation>
    <scope>NOMENCLATURE</scope>
</reference>
<reference key="3">
    <citation type="journal article" date="2013" name="Nat. Rev. Immunol.">
        <title>Six-of-the-best: unique contributions of gammadelta T cells to immunology.</title>
        <authorList>
            <person name="Vantourout P."/>
            <person name="Hayday A."/>
        </authorList>
    </citation>
    <scope>REVIEW ON FUNCTION AND ANTIGEN RECOGNITION</scope>
</reference>
<reference key="4">
    <citation type="journal article" date="2014" name="Annu. Rev. Immunol.">
        <title>gammadelta T cells: first line of defense and beyond.</title>
        <authorList>
            <person name="Chien Y.H."/>
            <person name="Meyer C."/>
            <person name="Bonneville M."/>
        </authorList>
    </citation>
    <scope>REVIEW ON DELTA T CELL RECEPTOR DIVERSITY</scope>
</reference>
<reference key="5">
    <citation type="journal article" date="2014" name="Front. Immunol.">
        <title>Immunoglobulin and T Cell Receptor Genes: IMGT((R)) and the Birth and Rise of Immunoinformatics.</title>
        <authorList>
            <person name="Lefranc M.P."/>
        </authorList>
    </citation>
    <scope>NOMENCLATURE</scope>
</reference>
<reference key="6">
    <citation type="journal article" date="2015" name="Front. Immunol.">
        <title>Five Layers of Receptor Signaling in gammadelta T-Cell Differentiation and Activation.</title>
        <authorList>
            <person name="Ribeiro S.T."/>
            <person name="Ribot J.C."/>
            <person name="Silva-Santos B."/>
        </authorList>
    </citation>
    <scope>REVIEW ON T CELL RECEPTOR SIGNALING</scope>
    <scope>SUBUNIT</scope>
</reference>
<reference key="7">
    <citation type="journal article" date="2017" name="Nat. Rev. Immunol.">
        <title>gammadelta T cells in homeostasis and host defence of epithelial barrier tissues.</title>
        <authorList>
            <person name="Nielsen M.M."/>
            <person name="Witherden D.A."/>
            <person name="Havran W.L."/>
        </authorList>
    </citation>
    <scope>REVIEW ON FUNCTION</scope>
</reference>
<comment type="function">
    <text evidence="1 2 3 4 5">D region of the variable domain of T cell receptor (TR) delta chain that participates in the antigen recognition (PubMed:24600447). Gamma-delta TRs recognize a variety of self and foreign non-peptide antigens frequently expressed at the epithelial boundaries between the host and external environment, including endogenous lipids presented by MH-like protein CD1D and phosphoantigens presented by butyrophilin-like molecule BTN3A1. Upon antigen recognition induces rapid, innate-like immune responses involved in pathogen clearance and tissue repair (PubMed:23348415, PubMed:28920588). Binding of gamma-delta TR complex to antigen triggers phosphorylation of immunoreceptor tyrosine-based activation motifs (ITAMs) in the CD3 chains by the LCK and FYN kinases, allowing the recruitment, phosphorylation, and activation of ZAP70 that facilitates phosphorylation of the scaffolding proteins LCP2 and LAT. This lead to the formation of a supramolecular signalosome that recruits the phospholipase PLCG1, resulting in calcium mobilization and ERK activation, ultimately leading to T cell expansion and differentiation into effector cells (PubMed:25674089). Gamma-delta TRs are produced through somatic rearrangement of a limited repertoire of variable (V), diversity (D), and joining (J) genes. The potential diversity of gamma-delta TRs is conferred by the unique ability to rearrange (D) genes in tandem and to utilize all three reading frames. The combinatorial diversity is considerably increased by the sequence exonuclease trimming and random nucleotide (N) region additions which occur during the V-(D)-J rearrangements (PubMed:24387714).</text>
</comment>
<comment type="subunit">
    <text evidence="4">Gamma-delta TR is a heterodimer composed of a gamma and delta chain; disulfide-linked. The gamma-delta TR is associated with the transmembrane signaling CD3 coreceptor proteins following the stoichiometry: a single gamma-delta TR heterodimer associates with one CD3D-CD3E heterodimer, one CD3G-CD3E heterodimer and one CD247 homodimer forming a stable octameric structure. Upon activation, gamma-delta TR complex associates with FCER1G to initiate intracellular signaling.</text>
</comment>
<comment type="subcellular location">
    <subcellularLocation>
        <location evidence="7">Cell membrane</location>
    </subcellularLocation>
</comment>
<comment type="polymorphism">
    <text evidence="7">There are several alleles. The sequence shown is that of IMGT allele TRDD1*01.</text>
</comment>
<comment type="caution">
    <text evidence="7">There are several genes encoding the D region in the T cell receptor delta locus. The peptide described in this entry is a representative for all the peptides encoded by these genes.</text>
</comment>
<protein>
    <recommendedName>
        <fullName evidence="6">T cell receptor delta diversity 1</fullName>
    </recommendedName>
</protein>
<accession>P0DPR3</accession>
<evidence type="ECO:0000303" key="1">
    <source>
    </source>
</evidence>
<evidence type="ECO:0000303" key="2">
    <source>
    </source>
</evidence>
<evidence type="ECO:0000303" key="3">
    <source>
    </source>
</evidence>
<evidence type="ECO:0000303" key="4">
    <source>
    </source>
</evidence>
<evidence type="ECO:0000303" key="5">
    <source>
    </source>
</evidence>
<evidence type="ECO:0000303" key="6">
    <source ref="2"/>
</evidence>
<evidence type="ECO:0000305" key="7"/>